<evidence type="ECO:0000255" key="1">
    <source>
        <dbReference type="HAMAP-Rule" id="MF_01672"/>
    </source>
</evidence>
<organism>
    <name type="scientific">Bacillus thuringiensis subsp. konkukian (strain 97-27)</name>
    <dbReference type="NCBI Taxonomy" id="281309"/>
    <lineage>
        <taxon>Bacteria</taxon>
        <taxon>Bacillati</taxon>
        <taxon>Bacillota</taxon>
        <taxon>Bacilli</taxon>
        <taxon>Bacillales</taxon>
        <taxon>Bacillaceae</taxon>
        <taxon>Bacillus</taxon>
        <taxon>Bacillus cereus group</taxon>
    </lineage>
</organism>
<gene>
    <name evidence="1" type="primary">iolE</name>
    <name type="ordered locus">BT9727_2299</name>
</gene>
<keyword id="KW-0170">Cobalt</keyword>
<keyword id="KW-0456">Lyase</keyword>
<keyword id="KW-0464">Manganese</keyword>
<dbReference type="EC" id="4.2.1.44" evidence="1"/>
<dbReference type="EMBL" id="AE017355">
    <property type="protein sequence ID" value="AAT59939.1"/>
    <property type="molecule type" value="Genomic_DNA"/>
</dbReference>
<dbReference type="RefSeq" id="WP_000471986.1">
    <property type="nucleotide sequence ID" value="NC_005957.1"/>
</dbReference>
<dbReference type="RefSeq" id="YP_036625.1">
    <property type="nucleotide sequence ID" value="NC_005957.1"/>
</dbReference>
<dbReference type="SMR" id="Q6HIK1"/>
<dbReference type="KEGG" id="btk:BT9727_2299"/>
<dbReference type="PATRIC" id="fig|281309.8.peg.2432"/>
<dbReference type="HOGENOM" id="CLU_059523_0_0_9"/>
<dbReference type="UniPathway" id="UPA00076">
    <property type="reaction ID" value="UER00144"/>
</dbReference>
<dbReference type="Proteomes" id="UP000001301">
    <property type="component" value="Chromosome"/>
</dbReference>
<dbReference type="GO" id="GO:0030145">
    <property type="term" value="F:manganese ion binding"/>
    <property type="evidence" value="ECO:0007669"/>
    <property type="project" value="UniProtKB-UniRule"/>
</dbReference>
<dbReference type="GO" id="GO:0050114">
    <property type="term" value="F:myo-inosose-2 dehydratase activity"/>
    <property type="evidence" value="ECO:0007669"/>
    <property type="project" value="UniProtKB-UniRule"/>
</dbReference>
<dbReference type="GO" id="GO:0019310">
    <property type="term" value="P:inositol catabolic process"/>
    <property type="evidence" value="ECO:0007669"/>
    <property type="project" value="UniProtKB-UniRule"/>
</dbReference>
<dbReference type="Gene3D" id="3.20.20.150">
    <property type="entry name" value="Divalent-metal-dependent TIM barrel enzymes"/>
    <property type="match status" value="1"/>
</dbReference>
<dbReference type="HAMAP" id="MF_01672">
    <property type="entry name" value="IolE"/>
    <property type="match status" value="1"/>
</dbReference>
<dbReference type="InterPro" id="IPR023952">
    <property type="entry name" value="IolE"/>
</dbReference>
<dbReference type="InterPro" id="IPR030823">
    <property type="entry name" value="IolE/MocC"/>
</dbReference>
<dbReference type="InterPro" id="IPR050312">
    <property type="entry name" value="IolE/XylAMocC-like"/>
</dbReference>
<dbReference type="InterPro" id="IPR036237">
    <property type="entry name" value="Xyl_isomerase-like_sf"/>
</dbReference>
<dbReference type="InterPro" id="IPR013022">
    <property type="entry name" value="Xyl_isomerase-like_TIM-brl"/>
</dbReference>
<dbReference type="NCBIfam" id="TIGR04379">
    <property type="entry name" value="myo_inos_iolE"/>
    <property type="match status" value="1"/>
</dbReference>
<dbReference type="PANTHER" id="PTHR12110">
    <property type="entry name" value="HYDROXYPYRUVATE ISOMERASE"/>
    <property type="match status" value="1"/>
</dbReference>
<dbReference type="PANTHER" id="PTHR12110:SF41">
    <property type="entry name" value="INOSOSE DEHYDRATASE"/>
    <property type="match status" value="1"/>
</dbReference>
<dbReference type="Pfam" id="PF01261">
    <property type="entry name" value="AP_endonuc_2"/>
    <property type="match status" value="1"/>
</dbReference>
<dbReference type="SUPFAM" id="SSF51658">
    <property type="entry name" value="Xylose isomerase-like"/>
    <property type="match status" value="1"/>
</dbReference>
<protein>
    <recommendedName>
        <fullName evidence="1">Inosose dehydratase</fullName>
        <ecNumber evidence="1">4.2.1.44</ecNumber>
    </recommendedName>
    <alternativeName>
        <fullName evidence="1">2-keto-myo-inositol dehydratase</fullName>
        <shortName evidence="1">2KMI dehydratase</shortName>
    </alternativeName>
</protein>
<comment type="function">
    <text evidence="1">Catalyzes the dehydration of inosose (2-keto-myo-inositol, 2KMI or 2,4,6/3,5-pentahydroxycyclohexanone) to 3D-(3,5/4)-trihydroxycyclohexane-1,2-dione (D-2,3-diketo-4-deoxy-epi-inositol).</text>
</comment>
<comment type="catalytic activity">
    <reaction evidence="1">
        <text>scyllo-inosose = 3D-3,5/4-trihydroxycyclohexane-1,2-dione + H2O</text>
        <dbReference type="Rhea" id="RHEA:14065"/>
        <dbReference type="ChEBI" id="CHEBI:15377"/>
        <dbReference type="ChEBI" id="CHEBI:17811"/>
        <dbReference type="ChEBI" id="CHEBI:28446"/>
        <dbReference type="EC" id="4.2.1.44"/>
    </reaction>
</comment>
<comment type="cofactor">
    <cofactor evidence="1">
        <name>glutathione</name>
        <dbReference type="ChEBI" id="CHEBI:57925"/>
    </cofactor>
</comment>
<comment type="cofactor">
    <cofactor evidence="1">
        <name>Co(2+)</name>
        <dbReference type="ChEBI" id="CHEBI:48828"/>
    </cofactor>
    <cofactor evidence="1">
        <name>Mn(2+)</name>
        <dbReference type="ChEBI" id="CHEBI:29035"/>
    </cofactor>
</comment>
<comment type="pathway">
    <text evidence="1">Polyol metabolism; myo-inositol degradation into acetyl-CoA; acetyl-CoA from myo-inositol: step 2/7.</text>
</comment>
<comment type="similarity">
    <text evidence="1">Belongs to the IolE/MocC family.</text>
</comment>
<accession>Q6HIK1</accession>
<reference key="1">
    <citation type="journal article" date="2006" name="J. Bacteriol.">
        <title>Pathogenomic sequence analysis of Bacillus cereus and Bacillus thuringiensis isolates closely related to Bacillus anthracis.</title>
        <authorList>
            <person name="Han C.S."/>
            <person name="Xie G."/>
            <person name="Challacombe J.F."/>
            <person name="Altherr M.R."/>
            <person name="Bhotika S.S."/>
            <person name="Bruce D."/>
            <person name="Campbell C.S."/>
            <person name="Campbell M.L."/>
            <person name="Chen J."/>
            <person name="Chertkov O."/>
            <person name="Cleland C."/>
            <person name="Dimitrijevic M."/>
            <person name="Doggett N.A."/>
            <person name="Fawcett J.J."/>
            <person name="Glavina T."/>
            <person name="Goodwin L.A."/>
            <person name="Hill K.K."/>
            <person name="Hitchcock P."/>
            <person name="Jackson P.J."/>
            <person name="Keim P."/>
            <person name="Kewalramani A.R."/>
            <person name="Longmire J."/>
            <person name="Lucas S."/>
            <person name="Malfatti S."/>
            <person name="McMurry K."/>
            <person name="Meincke L.J."/>
            <person name="Misra M."/>
            <person name="Moseman B.L."/>
            <person name="Mundt M."/>
            <person name="Munk A.C."/>
            <person name="Okinaka R.T."/>
            <person name="Parson-Quintana B."/>
            <person name="Reilly L.P."/>
            <person name="Richardson P."/>
            <person name="Robinson D.L."/>
            <person name="Rubin E."/>
            <person name="Saunders E."/>
            <person name="Tapia R."/>
            <person name="Tesmer J.G."/>
            <person name="Thayer N."/>
            <person name="Thompson L.S."/>
            <person name="Tice H."/>
            <person name="Ticknor L.O."/>
            <person name="Wills P.L."/>
            <person name="Brettin T.S."/>
            <person name="Gilna P."/>
        </authorList>
    </citation>
    <scope>NUCLEOTIDE SEQUENCE [LARGE SCALE GENOMIC DNA]</scope>
    <source>
        <strain>97-27</strain>
    </source>
</reference>
<name>IOLE_BACHK</name>
<proteinExistence type="inferred from homology"/>
<sequence length="298" mass="33595">MFKENTIKLGIAPIAWTNDDMPELGAENTFEQCISEMALAGFNGSEVGNKYPRNTVVLKKSLELRNLEIASAWFSTFLTTKPIEETVEEFIKHRDFLHGMGAKVIVVSEQGHSIQGLMDVPLFKNKPVFTEEEWEKLADGLHHLGKLAQEKGLHIVYHHHMGTGVQTTTEIEKLMDMTDPALVSLLFDTGHLVFSGEEPLYILKKYLPRIKHVHLKDIRQEVVDVVKEKELSFLQAVKNGAFTVPGDGVIVFDEVFTILANSNYQGWFVVEAEQDPALANPFEYALKARKFIQEKAGL</sequence>
<feature type="chain" id="PRO_0000352360" description="Inosose dehydratase">
    <location>
        <begin position="1"/>
        <end position="298"/>
    </location>
</feature>